<dbReference type="EC" id="2.7.11.33" evidence="1"/>
<dbReference type="EC" id="2.7.4.28" evidence="1"/>
<dbReference type="EMBL" id="AE004969">
    <property type="protein sequence ID" value="AAW88955.1"/>
    <property type="molecule type" value="Genomic_DNA"/>
</dbReference>
<dbReference type="RefSeq" id="WP_003687512.1">
    <property type="nucleotide sequence ID" value="NC_002946.2"/>
</dbReference>
<dbReference type="RefSeq" id="YP_207367.1">
    <property type="nucleotide sequence ID" value="NC_002946.2"/>
</dbReference>
<dbReference type="SMR" id="Q5FA32"/>
<dbReference type="STRING" id="242231.NGO_0202"/>
<dbReference type="KEGG" id="ngo:NGO_0202"/>
<dbReference type="PATRIC" id="fig|242231.10.peg.251"/>
<dbReference type="HOGENOM" id="CLU_046206_1_0_4"/>
<dbReference type="Proteomes" id="UP000000535">
    <property type="component" value="Chromosome"/>
</dbReference>
<dbReference type="GO" id="GO:0043531">
    <property type="term" value="F:ADP binding"/>
    <property type="evidence" value="ECO:0007669"/>
    <property type="project" value="UniProtKB-UniRule"/>
</dbReference>
<dbReference type="GO" id="GO:0005524">
    <property type="term" value="F:ATP binding"/>
    <property type="evidence" value="ECO:0007669"/>
    <property type="project" value="InterPro"/>
</dbReference>
<dbReference type="GO" id="GO:0016776">
    <property type="term" value="F:phosphotransferase activity, phosphate group as acceptor"/>
    <property type="evidence" value="ECO:0007669"/>
    <property type="project" value="UniProtKB-UniRule"/>
</dbReference>
<dbReference type="GO" id="GO:0004674">
    <property type="term" value="F:protein serine/threonine kinase activity"/>
    <property type="evidence" value="ECO:0007669"/>
    <property type="project" value="UniProtKB-UniRule"/>
</dbReference>
<dbReference type="HAMAP" id="MF_01062">
    <property type="entry name" value="PSRP"/>
    <property type="match status" value="1"/>
</dbReference>
<dbReference type="InterPro" id="IPR005177">
    <property type="entry name" value="Kinase-pyrophosphorylase"/>
</dbReference>
<dbReference type="InterPro" id="IPR026530">
    <property type="entry name" value="PSRP"/>
</dbReference>
<dbReference type="NCBIfam" id="NF003742">
    <property type="entry name" value="PRK05339.1"/>
    <property type="match status" value="1"/>
</dbReference>
<dbReference type="PANTHER" id="PTHR31756">
    <property type="entry name" value="PYRUVATE, PHOSPHATE DIKINASE REGULATORY PROTEIN 1, CHLOROPLASTIC"/>
    <property type="match status" value="1"/>
</dbReference>
<dbReference type="PANTHER" id="PTHR31756:SF3">
    <property type="entry name" value="PYRUVATE, PHOSPHATE DIKINASE REGULATORY PROTEIN 1, CHLOROPLASTIC"/>
    <property type="match status" value="1"/>
</dbReference>
<dbReference type="Pfam" id="PF03618">
    <property type="entry name" value="Kinase-PPPase"/>
    <property type="match status" value="1"/>
</dbReference>
<protein>
    <recommendedName>
        <fullName evidence="1">Putative phosphoenolpyruvate synthase regulatory protein</fullName>
        <shortName evidence="1">PEP synthase regulatory protein</shortName>
        <shortName evidence="1">PSRP</shortName>
        <ecNumber evidence="1">2.7.11.33</ecNumber>
        <ecNumber evidence="1">2.7.4.28</ecNumber>
    </recommendedName>
    <alternativeName>
        <fullName evidence="1">Pyruvate, water dikinase regulatory protein</fullName>
    </alternativeName>
</protein>
<reference key="1">
    <citation type="submission" date="2003-03" db="EMBL/GenBank/DDBJ databases">
        <title>The complete genome sequence of Neisseria gonorrhoeae.</title>
        <authorList>
            <person name="Lewis L.A."/>
            <person name="Gillaspy A.F."/>
            <person name="McLaughlin R.E."/>
            <person name="Gipson M."/>
            <person name="Ducey T.F."/>
            <person name="Ownbey T."/>
            <person name="Hartman K."/>
            <person name="Nydick C."/>
            <person name="Carson M.B."/>
            <person name="Vaughn J."/>
            <person name="Thomson C."/>
            <person name="Song L."/>
            <person name="Lin S."/>
            <person name="Yuan X."/>
            <person name="Najar F."/>
            <person name="Zhan M."/>
            <person name="Ren Q."/>
            <person name="Zhu H."/>
            <person name="Qi S."/>
            <person name="Kenton S.M."/>
            <person name="Lai H."/>
            <person name="White J.D."/>
            <person name="Clifton S."/>
            <person name="Roe B.A."/>
            <person name="Dyer D.W."/>
        </authorList>
    </citation>
    <scope>NUCLEOTIDE SEQUENCE [LARGE SCALE GENOMIC DNA]</scope>
    <source>
        <strain>ATCC 700825 / FA 1090</strain>
    </source>
</reference>
<keyword id="KW-0418">Kinase</keyword>
<keyword id="KW-0547">Nucleotide-binding</keyword>
<keyword id="KW-1185">Reference proteome</keyword>
<keyword id="KW-0723">Serine/threonine-protein kinase</keyword>
<keyword id="KW-0808">Transferase</keyword>
<evidence type="ECO:0000255" key="1">
    <source>
        <dbReference type="HAMAP-Rule" id="MF_01062"/>
    </source>
</evidence>
<gene>
    <name type="ordered locus">NGO_0202</name>
</gene>
<organism>
    <name type="scientific">Neisseria gonorrhoeae (strain ATCC 700825 / FA 1090)</name>
    <dbReference type="NCBI Taxonomy" id="242231"/>
    <lineage>
        <taxon>Bacteria</taxon>
        <taxon>Pseudomonadati</taxon>
        <taxon>Pseudomonadota</taxon>
        <taxon>Betaproteobacteria</taxon>
        <taxon>Neisseriales</taxon>
        <taxon>Neisseriaceae</taxon>
        <taxon>Neisseria</taxon>
    </lineage>
</organism>
<sequence>MSSPRQVFYISDRTGLTAENIGEALLNQFGNLSFKRHTHPFVDTPEKARAVVEKVNRSRQENGQRPIAFVSVVDDEIRRIIKGADAFQINFFETFLGLLEKELNTEATVSGQGHHSIGNTKRYDARMEAVNFSLNHDDGVSDKNLQEADVILMGVSRSGKTPTCLYLALQYGIRAANYPLIPDDLESADLPRMVKPYKDKLFGLTIQPERLQAIRQERRPNSAYARIDTCRSEVADAQSMFRRHGIPFANTTDKSVEELAVHILQACKLKRRF</sequence>
<accession>Q5FA32</accession>
<comment type="function">
    <text evidence="1">Bifunctional serine/threonine kinase and phosphorylase involved in the regulation of the phosphoenolpyruvate synthase (PEPS) by catalyzing its phosphorylation/dephosphorylation.</text>
</comment>
<comment type="catalytic activity">
    <reaction evidence="1">
        <text>[pyruvate, water dikinase] + ADP = [pyruvate, water dikinase]-phosphate + AMP + H(+)</text>
        <dbReference type="Rhea" id="RHEA:46020"/>
        <dbReference type="Rhea" id="RHEA-COMP:11425"/>
        <dbReference type="Rhea" id="RHEA-COMP:11426"/>
        <dbReference type="ChEBI" id="CHEBI:15378"/>
        <dbReference type="ChEBI" id="CHEBI:43176"/>
        <dbReference type="ChEBI" id="CHEBI:68546"/>
        <dbReference type="ChEBI" id="CHEBI:456215"/>
        <dbReference type="ChEBI" id="CHEBI:456216"/>
        <dbReference type="EC" id="2.7.11.33"/>
    </reaction>
</comment>
<comment type="catalytic activity">
    <reaction evidence="1">
        <text>[pyruvate, water dikinase]-phosphate + phosphate + H(+) = [pyruvate, water dikinase] + diphosphate</text>
        <dbReference type="Rhea" id="RHEA:48580"/>
        <dbReference type="Rhea" id="RHEA-COMP:11425"/>
        <dbReference type="Rhea" id="RHEA-COMP:11426"/>
        <dbReference type="ChEBI" id="CHEBI:15378"/>
        <dbReference type="ChEBI" id="CHEBI:33019"/>
        <dbReference type="ChEBI" id="CHEBI:43176"/>
        <dbReference type="ChEBI" id="CHEBI:43474"/>
        <dbReference type="ChEBI" id="CHEBI:68546"/>
        <dbReference type="EC" id="2.7.4.28"/>
    </reaction>
</comment>
<comment type="similarity">
    <text evidence="1">Belongs to the pyruvate, phosphate/water dikinase regulatory protein family. PSRP subfamily.</text>
</comment>
<proteinExistence type="inferred from homology"/>
<name>PSRP_NEIG1</name>
<feature type="chain" id="PRO_0000196677" description="Putative phosphoenolpyruvate synthase regulatory protein">
    <location>
        <begin position="1"/>
        <end position="273"/>
    </location>
</feature>
<feature type="binding site" evidence="1">
    <location>
        <begin position="154"/>
        <end position="161"/>
    </location>
    <ligand>
        <name>ADP</name>
        <dbReference type="ChEBI" id="CHEBI:456216"/>
    </ligand>
</feature>